<comment type="function">
    <text evidence="1">Catalyzes the biosynthesis of agmatine from arginine.</text>
</comment>
<comment type="catalytic activity">
    <reaction evidence="1">
        <text>L-arginine + H(+) = agmatine + CO2</text>
        <dbReference type="Rhea" id="RHEA:17641"/>
        <dbReference type="ChEBI" id="CHEBI:15378"/>
        <dbReference type="ChEBI" id="CHEBI:16526"/>
        <dbReference type="ChEBI" id="CHEBI:32682"/>
        <dbReference type="ChEBI" id="CHEBI:58145"/>
        <dbReference type="EC" id="4.1.1.19"/>
    </reaction>
</comment>
<comment type="cofactor">
    <cofactor evidence="1">
        <name>Mg(2+)</name>
        <dbReference type="ChEBI" id="CHEBI:18420"/>
    </cofactor>
</comment>
<comment type="cofactor">
    <cofactor evidence="1">
        <name>pyridoxal 5'-phosphate</name>
        <dbReference type="ChEBI" id="CHEBI:597326"/>
    </cofactor>
</comment>
<comment type="pathway">
    <text evidence="1">Amine and polyamine biosynthesis; agmatine biosynthesis; agmatine from L-arginine: step 1/1.</text>
</comment>
<comment type="similarity">
    <text evidence="1">Belongs to the Orn/Lys/Arg decarboxylase class-II family. SpeA subfamily.</text>
</comment>
<protein>
    <recommendedName>
        <fullName evidence="1">Biosynthetic arginine decarboxylase</fullName>
        <shortName evidence="1">ADC</shortName>
        <ecNumber evidence="1">4.1.1.19</ecNumber>
    </recommendedName>
</protein>
<sequence length="648" mass="73405">MTNFEPKKLKKNWTIEDSISTYEIDKWGDKYFSINSKGNISVTKDINSEKKIDLFKLVRELKSREINTPLIIRFNDILKDRINALHDAFLKAIKTYKYKNIYQGVFPVKCNQQKNVLEKIIEFGSPWNFGLEVGSKSELLIGLALLENQNSLLICNGYKDKKYIEIATLARKLGKNPIIVIEQKDEVNRIIEAVQDLNASPLIGIRAKLSSKSSGRWSKSVGDNSKFGLSIPEIMSTIKELKEANLINEMRLLHFHIGSQISDIAVIKDALQEASQIYVELFKLGAPMKYIDVGGGLGIDFDGTKTSSNTSTNYSLQNYANDVIATIKDSCELNNIEHPTIISESGRAIISHCSVLIFNVLGTSHVSSKLKIYDDKKQSLIISNLIETFYELKKLKNKKINLSQIIELWNDAKKFKEDCLVAFRLGFLSLAERAYAEELTWACAKEIANNLNNDEINHPDLFEITETLASTYYANLSIFKSIPDCWAINQIFPIMPIHRHLEEPFCKGNFADLTCDSDGKLNSFINNGKIKSLLNLHEPEQDKDYLIGIFMTGAYQEALGNLHNLFGNTNVVHIDINQNDSYKVKNIIKEDSKSEILQLLDYSSASLVESIRINTEAAIDQKKLTIEEARKLIDQIEISLRKSSYLSE</sequence>
<keyword id="KW-0210">Decarboxylase</keyword>
<keyword id="KW-0456">Lyase</keyword>
<keyword id="KW-0460">Magnesium</keyword>
<keyword id="KW-0479">Metal-binding</keyword>
<keyword id="KW-0620">Polyamine biosynthesis</keyword>
<keyword id="KW-0663">Pyridoxal phosphate</keyword>
<keyword id="KW-0745">Spermidine biosynthesis</keyword>
<organism>
    <name type="scientific">Prochlorococcus marinus (strain MIT 9215)</name>
    <dbReference type="NCBI Taxonomy" id="93060"/>
    <lineage>
        <taxon>Bacteria</taxon>
        <taxon>Bacillati</taxon>
        <taxon>Cyanobacteriota</taxon>
        <taxon>Cyanophyceae</taxon>
        <taxon>Synechococcales</taxon>
        <taxon>Prochlorococcaceae</taxon>
        <taxon>Prochlorococcus</taxon>
    </lineage>
</organism>
<evidence type="ECO:0000255" key="1">
    <source>
        <dbReference type="HAMAP-Rule" id="MF_01417"/>
    </source>
</evidence>
<dbReference type="EC" id="4.1.1.19" evidence="1"/>
<dbReference type="EMBL" id="CP000825">
    <property type="protein sequence ID" value="ABV49674.1"/>
    <property type="molecule type" value="Genomic_DNA"/>
</dbReference>
<dbReference type="RefSeq" id="WP_012006859.1">
    <property type="nucleotide sequence ID" value="NC_009840.1"/>
</dbReference>
<dbReference type="SMR" id="A8G243"/>
<dbReference type="STRING" id="93060.P9215_00551"/>
<dbReference type="KEGG" id="pmh:P9215_00551"/>
<dbReference type="eggNOG" id="COG1166">
    <property type="taxonomic scope" value="Bacteria"/>
</dbReference>
<dbReference type="HOGENOM" id="CLU_027243_1_0_3"/>
<dbReference type="OrthoDB" id="9802658at2"/>
<dbReference type="UniPathway" id="UPA00186">
    <property type="reaction ID" value="UER00284"/>
</dbReference>
<dbReference type="Proteomes" id="UP000002014">
    <property type="component" value="Chromosome"/>
</dbReference>
<dbReference type="GO" id="GO:0008792">
    <property type="term" value="F:arginine decarboxylase activity"/>
    <property type="evidence" value="ECO:0007669"/>
    <property type="project" value="UniProtKB-UniRule"/>
</dbReference>
<dbReference type="GO" id="GO:0046872">
    <property type="term" value="F:metal ion binding"/>
    <property type="evidence" value="ECO:0007669"/>
    <property type="project" value="UniProtKB-KW"/>
</dbReference>
<dbReference type="GO" id="GO:0006527">
    <property type="term" value="P:arginine catabolic process"/>
    <property type="evidence" value="ECO:0007669"/>
    <property type="project" value="InterPro"/>
</dbReference>
<dbReference type="GO" id="GO:0008295">
    <property type="term" value="P:spermidine biosynthetic process"/>
    <property type="evidence" value="ECO:0007669"/>
    <property type="project" value="UniProtKB-UniRule"/>
</dbReference>
<dbReference type="CDD" id="cd06830">
    <property type="entry name" value="PLPDE_III_ADC"/>
    <property type="match status" value="1"/>
</dbReference>
<dbReference type="Gene3D" id="1.20.58.930">
    <property type="match status" value="1"/>
</dbReference>
<dbReference type="Gene3D" id="3.20.20.10">
    <property type="entry name" value="Alanine racemase"/>
    <property type="match status" value="1"/>
</dbReference>
<dbReference type="Gene3D" id="2.40.37.10">
    <property type="entry name" value="Lyase, Ornithine Decarboxylase, Chain A, domain 1"/>
    <property type="match status" value="1"/>
</dbReference>
<dbReference type="HAMAP" id="MF_01417">
    <property type="entry name" value="SpeA"/>
    <property type="match status" value="1"/>
</dbReference>
<dbReference type="InterPro" id="IPR009006">
    <property type="entry name" value="Ala_racemase/Decarboxylase_C"/>
</dbReference>
<dbReference type="InterPro" id="IPR040634">
    <property type="entry name" value="Arg_decarb_HB"/>
</dbReference>
<dbReference type="InterPro" id="IPR041128">
    <property type="entry name" value="Arg_decarbox_C"/>
</dbReference>
<dbReference type="InterPro" id="IPR002985">
    <property type="entry name" value="Arg_decrbxlase"/>
</dbReference>
<dbReference type="InterPro" id="IPR022657">
    <property type="entry name" value="De-COase2_CS"/>
</dbReference>
<dbReference type="InterPro" id="IPR022644">
    <property type="entry name" value="De-COase2_N"/>
</dbReference>
<dbReference type="InterPro" id="IPR022653">
    <property type="entry name" value="De-COase2_pyr-phos_BS"/>
</dbReference>
<dbReference type="InterPro" id="IPR000183">
    <property type="entry name" value="Orn/DAP/Arg_de-COase"/>
</dbReference>
<dbReference type="InterPro" id="IPR029066">
    <property type="entry name" value="PLP-binding_barrel"/>
</dbReference>
<dbReference type="NCBIfam" id="NF003763">
    <property type="entry name" value="PRK05354.1"/>
    <property type="match status" value="1"/>
</dbReference>
<dbReference type="NCBIfam" id="TIGR01273">
    <property type="entry name" value="speA"/>
    <property type="match status" value="1"/>
</dbReference>
<dbReference type="PANTHER" id="PTHR43295">
    <property type="entry name" value="ARGININE DECARBOXYLASE"/>
    <property type="match status" value="1"/>
</dbReference>
<dbReference type="PANTHER" id="PTHR43295:SF9">
    <property type="entry name" value="BIOSYNTHETIC ARGININE DECARBOXYLASE"/>
    <property type="match status" value="1"/>
</dbReference>
<dbReference type="Pfam" id="PF17810">
    <property type="entry name" value="Arg_decarb_HB"/>
    <property type="match status" value="1"/>
</dbReference>
<dbReference type="Pfam" id="PF17944">
    <property type="entry name" value="Arg_decarbox_C"/>
    <property type="match status" value="1"/>
</dbReference>
<dbReference type="Pfam" id="PF02784">
    <property type="entry name" value="Orn_Arg_deC_N"/>
    <property type="match status" value="1"/>
</dbReference>
<dbReference type="PIRSF" id="PIRSF001336">
    <property type="entry name" value="Arg_decrbxlase"/>
    <property type="match status" value="1"/>
</dbReference>
<dbReference type="PRINTS" id="PR01180">
    <property type="entry name" value="ARGDCRBXLASE"/>
</dbReference>
<dbReference type="PRINTS" id="PR01179">
    <property type="entry name" value="ODADCRBXLASE"/>
</dbReference>
<dbReference type="SUPFAM" id="SSF50621">
    <property type="entry name" value="Alanine racemase C-terminal domain-like"/>
    <property type="match status" value="1"/>
</dbReference>
<dbReference type="SUPFAM" id="SSF51419">
    <property type="entry name" value="PLP-binding barrel"/>
    <property type="match status" value="1"/>
</dbReference>
<dbReference type="PROSITE" id="PS00878">
    <property type="entry name" value="ODR_DC_2_1"/>
    <property type="match status" value="1"/>
</dbReference>
<dbReference type="PROSITE" id="PS00879">
    <property type="entry name" value="ODR_DC_2_2"/>
    <property type="match status" value="1"/>
</dbReference>
<feature type="chain" id="PRO_1000068493" description="Biosynthetic arginine decarboxylase">
    <location>
        <begin position="1"/>
        <end position="648"/>
    </location>
</feature>
<feature type="binding site" evidence="1">
    <location>
        <begin position="291"/>
        <end position="301"/>
    </location>
    <ligand>
        <name>substrate</name>
    </ligand>
</feature>
<feature type="modified residue" description="N6-(pyridoxal phosphate)lysine" evidence="1">
    <location>
        <position position="109"/>
    </location>
</feature>
<reference key="1">
    <citation type="journal article" date="2007" name="PLoS Genet.">
        <title>Patterns and implications of gene gain and loss in the evolution of Prochlorococcus.</title>
        <authorList>
            <person name="Kettler G.C."/>
            <person name="Martiny A.C."/>
            <person name="Huang K."/>
            <person name="Zucker J."/>
            <person name="Coleman M.L."/>
            <person name="Rodrigue S."/>
            <person name="Chen F."/>
            <person name="Lapidus A."/>
            <person name="Ferriera S."/>
            <person name="Johnson J."/>
            <person name="Steglich C."/>
            <person name="Church G.M."/>
            <person name="Richardson P."/>
            <person name="Chisholm S.W."/>
        </authorList>
    </citation>
    <scope>NUCLEOTIDE SEQUENCE [LARGE SCALE GENOMIC DNA]</scope>
    <source>
        <strain>MIT 9215</strain>
    </source>
</reference>
<accession>A8G243</accession>
<name>SPEA_PROM2</name>
<gene>
    <name evidence="1" type="primary">speA</name>
    <name type="ordered locus">P9215_00551</name>
</gene>
<proteinExistence type="inferred from homology"/>